<organism>
    <name type="scientific">Campylobacter jejuni subsp. jejuni serotype O:2 (strain ATCC 700819 / NCTC 11168)</name>
    <dbReference type="NCBI Taxonomy" id="192222"/>
    <lineage>
        <taxon>Bacteria</taxon>
        <taxon>Pseudomonadati</taxon>
        <taxon>Campylobacterota</taxon>
        <taxon>Epsilonproteobacteria</taxon>
        <taxon>Campylobacterales</taxon>
        <taxon>Campylobacteraceae</taxon>
        <taxon>Campylobacter</taxon>
    </lineage>
</organism>
<gene>
    <name evidence="1" type="primary">tpx</name>
    <name type="ordered locus">Cj0779</name>
</gene>
<protein>
    <recommendedName>
        <fullName evidence="1">Thiol peroxidase</fullName>
        <shortName evidence="1">Tpx</shortName>
        <ecNumber evidence="1">1.11.1.24</ecNumber>
    </recommendedName>
    <alternativeName>
        <fullName evidence="1">Peroxiredoxin tpx</fullName>
        <shortName evidence="1">Prx</shortName>
    </alternativeName>
    <alternativeName>
        <fullName evidence="1">Thioredoxin peroxidase</fullName>
    </alternativeName>
    <alternativeName>
        <fullName evidence="1">Thioredoxin-dependent peroxiredoxin</fullName>
    </alternativeName>
</protein>
<accession>Q9PPE0</accession>
<accession>Q0PAB1</accession>
<keyword id="KW-0049">Antioxidant</keyword>
<keyword id="KW-1015">Disulfide bond</keyword>
<keyword id="KW-0560">Oxidoreductase</keyword>
<keyword id="KW-0575">Peroxidase</keyword>
<keyword id="KW-0676">Redox-active center</keyword>
<keyword id="KW-1185">Reference proteome</keyword>
<proteinExistence type="inferred from homology"/>
<reference key="1">
    <citation type="journal article" date="2000" name="Nature">
        <title>The genome sequence of the food-borne pathogen Campylobacter jejuni reveals hypervariable sequences.</title>
        <authorList>
            <person name="Parkhill J."/>
            <person name="Wren B.W."/>
            <person name="Mungall K.L."/>
            <person name="Ketley J.M."/>
            <person name="Churcher C.M."/>
            <person name="Basham D."/>
            <person name="Chillingworth T."/>
            <person name="Davies R.M."/>
            <person name="Feltwell T."/>
            <person name="Holroyd S."/>
            <person name="Jagels K."/>
            <person name="Karlyshev A.V."/>
            <person name="Moule S."/>
            <person name="Pallen M.J."/>
            <person name="Penn C.W."/>
            <person name="Quail M.A."/>
            <person name="Rajandream M.A."/>
            <person name="Rutherford K.M."/>
            <person name="van Vliet A.H.M."/>
            <person name="Whitehead S."/>
            <person name="Barrell B.G."/>
        </authorList>
    </citation>
    <scope>NUCLEOTIDE SEQUENCE [LARGE SCALE GENOMIC DNA]</scope>
    <source>
        <strain>ATCC 700819 / NCTC 11168</strain>
    </source>
</reference>
<feature type="chain" id="PRO_0000187871" description="Thiol peroxidase">
    <location>
        <begin position="1"/>
        <end position="175"/>
    </location>
</feature>
<feature type="domain" description="Thioredoxin" evidence="1">
    <location>
        <begin position="18"/>
        <end position="165"/>
    </location>
</feature>
<feature type="active site" description="Cysteine sulfenic acid (-SOH) intermediate" evidence="1">
    <location>
        <position position="59"/>
    </location>
</feature>
<feature type="disulfide bond" description="Redox-active" evidence="1">
    <location>
        <begin position="59"/>
        <end position="93"/>
    </location>
</feature>
<sequence>MSIVNFKGNPVKLKGNSVEVGADAPKVNLKAKDLSVIEIGAAGKTQIILSVPSLDTPVCATEAREFNKKVASYNGAEVIVVSMDLPFAMGRFCSTEGIENLSVASDFVAKEFGEKYGVLINEGALEGLLARAVFVIKEGKVAYKELVNEITEMPDIAKLDAFFGGSSCCGGCGCH</sequence>
<comment type="function">
    <text evidence="1">Thiol-specific peroxidase that catalyzes the reduction of hydrogen peroxide and organic hydroperoxides to water and alcohols, respectively. Plays a role in cell protection against oxidative stress by detoxifying peroxides.</text>
</comment>
<comment type="catalytic activity">
    <reaction evidence="1">
        <text>a hydroperoxide + [thioredoxin]-dithiol = an alcohol + [thioredoxin]-disulfide + H2O</text>
        <dbReference type="Rhea" id="RHEA:62620"/>
        <dbReference type="Rhea" id="RHEA-COMP:10698"/>
        <dbReference type="Rhea" id="RHEA-COMP:10700"/>
        <dbReference type="ChEBI" id="CHEBI:15377"/>
        <dbReference type="ChEBI" id="CHEBI:29950"/>
        <dbReference type="ChEBI" id="CHEBI:30879"/>
        <dbReference type="ChEBI" id="CHEBI:35924"/>
        <dbReference type="ChEBI" id="CHEBI:50058"/>
        <dbReference type="EC" id="1.11.1.24"/>
    </reaction>
</comment>
<comment type="subunit">
    <text evidence="1">Homodimer.</text>
</comment>
<comment type="miscellaneous">
    <text evidence="1">The active site is a conserved redox-active cysteine residue, the peroxidatic cysteine (C(P)), which makes the nucleophilic attack on the peroxide substrate. The peroxide oxidizes the C(P)-SH to cysteine sulfenic acid (C(P)-SOH), which then reacts with another cysteine residue, the resolving cysteine (C(R)), to form a disulfide bridge. The disulfide is subsequently reduced by an appropriate electron donor to complete the catalytic cycle. In this atypical 2-Cys peroxiredoxin, C(R) is present in the same subunit to form an intramolecular disulfide. The disulfide is subsequently reduced by thioredoxin.</text>
</comment>
<comment type="similarity">
    <text evidence="1">Belongs to the peroxiredoxin family. Tpx subfamily.</text>
</comment>
<dbReference type="EC" id="1.11.1.24" evidence="1"/>
<dbReference type="EMBL" id="AL111168">
    <property type="protein sequence ID" value="CAL34907.1"/>
    <property type="molecule type" value="Genomic_DNA"/>
</dbReference>
<dbReference type="PIR" id="C81349">
    <property type="entry name" value="C81349"/>
</dbReference>
<dbReference type="RefSeq" id="WP_002852593.1">
    <property type="nucleotide sequence ID" value="NZ_SZUC01000001.1"/>
</dbReference>
<dbReference type="RefSeq" id="YP_002344186.1">
    <property type="nucleotide sequence ID" value="NC_002163.1"/>
</dbReference>
<dbReference type="SMR" id="Q9PPE0"/>
<dbReference type="IntAct" id="Q9PPE0">
    <property type="interactions" value="34"/>
</dbReference>
<dbReference type="STRING" id="192222.Cj0779"/>
<dbReference type="PaxDb" id="192222-Cj0779"/>
<dbReference type="EnsemblBacteria" id="CAL34907">
    <property type="protein sequence ID" value="CAL34907"/>
    <property type="gene ID" value="Cj0779"/>
</dbReference>
<dbReference type="GeneID" id="905088"/>
<dbReference type="KEGG" id="cje:Cj0779"/>
<dbReference type="PATRIC" id="fig|192222.6.peg.767"/>
<dbReference type="eggNOG" id="COG2077">
    <property type="taxonomic scope" value="Bacteria"/>
</dbReference>
<dbReference type="HOGENOM" id="CLU_042529_12_2_7"/>
<dbReference type="OrthoDB" id="9781543at2"/>
<dbReference type="Proteomes" id="UP000000799">
    <property type="component" value="Chromosome"/>
</dbReference>
<dbReference type="GO" id="GO:0008379">
    <property type="term" value="F:thioredoxin peroxidase activity"/>
    <property type="evidence" value="ECO:0007669"/>
    <property type="project" value="UniProtKB-UniRule"/>
</dbReference>
<dbReference type="CDD" id="cd03014">
    <property type="entry name" value="PRX_Atyp2cys"/>
    <property type="match status" value="1"/>
</dbReference>
<dbReference type="Gene3D" id="3.40.30.10">
    <property type="entry name" value="Glutaredoxin"/>
    <property type="match status" value="1"/>
</dbReference>
<dbReference type="HAMAP" id="MF_00269">
    <property type="entry name" value="Tpx"/>
    <property type="match status" value="1"/>
</dbReference>
<dbReference type="InterPro" id="IPR013740">
    <property type="entry name" value="Redoxin"/>
</dbReference>
<dbReference type="InterPro" id="IPR036249">
    <property type="entry name" value="Thioredoxin-like_sf"/>
</dbReference>
<dbReference type="InterPro" id="IPR013766">
    <property type="entry name" value="Thioredoxin_domain"/>
</dbReference>
<dbReference type="InterPro" id="IPR002065">
    <property type="entry name" value="TPX"/>
</dbReference>
<dbReference type="InterPro" id="IPR018219">
    <property type="entry name" value="Tpx_CS"/>
</dbReference>
<dbReference type="InterPro" id="IPR050455">
    <property type="entry name" value="Tpx_Peroxidase_subfamily"/>
</dbReference>
<dbReference type="NCBIfam" id="NF001808">
    <property type="entry name" value="PRK00522.1"/>
    <property type="match status" value="1"/>
</dbReference>
<dbReference type="PANTHER" id="PTHR43110">
    <property type="entry name" value="THIOL PEROXIDASE"/>
    <property type="match status" value="1"/>
</dbReference>
<dbReference type="PANTHER" id="PTHR43110:SF1">
    <property type="entry name" value="THIOL PEROXIDASE"/>
    <property type="match status" value="1"/>
</dbReference>
<dbReference type="Pfam" id="PF08534">
    <property type="entry name" value="Redoxin"/>
    <property type="match status" value="1"/>
</dbReference>
<dbReference type="SUPFAM" id="SSF52833">
    <property type="entry name" value="Thioredoxin-like"/>
    <property type="match status" value="1"/>
</dbReference>
<dbReference type="PROSITE" id="PS51352">
    <property type="entry name" value="THIOREDOXIN_2"/>
    <property type="match status" value="1"/>
</dbReference>
<dbReference type="PROSITE" id="PS01265">
    <property type="entry name" value="TPX"/>
    <property type="match status" value="1"/>
</dbReference>
<evidence type="ECO:0000255" key="1">
    <source>
        <dbReference type="HAMAP-Rule" id="MF_00269"/>
    </source>
</evidence>
<name>TPX_CAMJE</name>